<dbReference type="EC" id="2.7.9.3" evidence="1"/>
<dbReference type="EMBL" id="AL590842">
    <property type="protein sequence ID" value="CAL20795.1"/>
    <property type="molecule type" value="Genomic_DNA"/>
</dbReference>
<dbReference type="EMBL" id="AE009952">
    <property type="protein sequence ID" value="AAM85719.1"/>
    <property type="molecule type" value="Genomic_DNA"/>
</dbReference>
<dbReference type="EMBL" id="AE017042">
    <property type="protein sequence ID" value="AAS62181.1"/>
    <property type="molecule type" value="Genomic_DNA"/>
</dbReference>
<dbReference type="PIR" id="AH0263">
    <property type="entry name" value="AH0263"/>
</dbReference>
<dbReference type="RefSeq" id="WP_002211671.1">
    <property type="nucleotide sequence ID" value="NZ_WUCL01000049.1"/>
</dbReference>
<dbReference type="RefSeq" id="YP_002347139.1">
    <property type="nucleotide sequence ID" value="NC_003143.1"/>
</dbReference>
<dbReference type="SMR" id="Q8ZEK1"/>
<dbReference type="IntAct" id="Q8ZEK1">
    <property type="interactions" value="2"/>
</dbReference>
<dbReference type="STRING" id="214092.YPO2164"/>
<dbReference type="PaxDb" id="214092-YPO2164"/>
<dbReference type="DNASU" id="1147104"/>
<dbReference type="EnsemblBacteria" id="AAS62181">
    <property type="protein sequence ID" value="AAS62181"/>
    <property type="gene ID" value="YP_1964"/>
</dbReference>
<dbReference type="GeneID" id="57976504"/>
<dbReference type="KEGG" id="ype:YPO2164"/>
<dbReference type="KEGG" id="ypk:y2157"/>
<dbReference type="KEGG" id="ypm:YP_1964"/>
<dbReference type="PATRIC" id="fig|214092.21.peg.2551"/>
<dbReference type="eggNOG" id="COG0709">
    <property type="taxonomic scope" value="Bacteria"/>
</dbReference>
<dbReference type="HOGENOM" id="CLU_032859_0_1_6"/>
<dbReference type="OMA" id="LARDWMC"/>
<dbReference type="OrthoDB" id="9767928at2"/>
<dbReference type="Proteomes" id="UP000000815">
    <property type="component" value="Chromosome"/>
</dbReference>
<dbReference type="Proteomes" id="UP000001019">
    <property type="component" value="Chromosome"/>
</dbReference>
<dbReference type="Proteomes" id="UP000002490">
    <property type="component" value="Chromosome"/>
</dbReference>
<dbReference type="GO" id="GO:0005737">
    <property type="term" value="C:cytoplasm"/>
    <property type="evidence" value="ECO:0000318"/>
    <property type="project" value="GO_Central"/>
</dbReference>
<dbReference type="GO" id="GO:0005524">
    <property type="term" value="F:ATP binding"/>
    <property type="evidence" value="ECO:0007669"/>
    <property type="project" value="UniProtKB-UniRule"/>
</dbReference>
<dbReference type="GO" id="GO:0000287">
    <property type="term" value="F:magnesium ion binding"/>
    <property type="evidence" value="ECO:0007669"/>
    <property type="project" value="UniProtKB-UniRule"/>
</dbReference>
<dbReference type="GO" id="GO:0004756">
    <property type="term" value="F:selenide, water dikinase activity"/>
    <property type="evidence" value="ECO:0000318"/>
    <property type="project" value="GO_Central"/>
</dbReference>
<dbReference type="GO" id="GO:0016260">
    <property type="term" value="P:selenocysteine biosynthetic process"/>
    <property type="evidence" value="ECO:0000318"/>
    <property type="project" value="GO_Central"/>
</dbReference>
<dbReference type="CDD" id="cd02195">
    <property type="entry name" value="SelD"/>
    <property type="match status" value="1"/>
</dbReference>
<dbReference type="FunFam" id="3.30.1330.10:FF:000003">
    <property type="entry name" value="Selenide, water dikinase"/>
    <property type="match status" value="1"/>
</dbReference>
<dbReference type="FunFam" id="3.90.650.10:FF:000004">
    <property type="entry name" value="Selenide, water dikinase"/>
    <property type="match status" value="1"/>
</dbReference>
<dbReference type="Gene3D" id="3.90.650.10">
    <property type="entry name" value="PurM-like C-terminal domain"/>
    <property type="match status" value="1"/>
</dbReference>
<dbReference type="Gene3D" id="3.30.1330.10">
    <property type="entry name" value="PurM-like, N-terminal domain"/>
    <property type="match status" value="1"/>
</dbReference>
<dbReference type="HAMAP" id="MF_00625">
    <property type="entry name" value="SelD"/>
    <property type="match status" value="1"/>
</dbReference>
<dbReference type="InterPro" id="IPR010918">
    <property type="entry name" value="PurM-like_C_dom"/>
</dbReference>
<dbReference type="InterPro" id="IPR036676">
    <property type="entry name" value="PurM-like_C_sf"/>
</dbReference>
<dbReference type="InterPro" id="IPR016188">
    <property type="entry name" value="PurM-like_N"/>
</dbReference>
<dbReference type="InterPro" id="IPR036921">
    <property type="entry name" value="PurM-like_N_sf"/>
</dbReference>
<dbReference type="InterPro" id="IPR023061">
    <property type="entry name" value="SelD_I"/>
</dbReference>
<dbReference type="InterPro" id="IPR004536">
    <property type="entry name" value="SPS/SelD"/>
</dbReference>
<dbReference type="NCBIfam" id="NF002098">
    <property type="entry name" value="PRK00943.1"/>
    <property type="match status" value="1"/>
</dbReference>
<dbReference type="NCBIfam" id="TIGR00476">
    <property type="entry name" value="selD"/>
    <property type="match status" value="1"/>
</dbReference>
<dbReference type="PANTHER" id="PTHR10256:SF0">
    <property type="entry name" value="INACTIVE SELENIDE, WATER DIKINASE-LIKE PROTEIN-RELATED"/>
    <property type="match status" value="1"/>
</dbReference>
<dbReference type="PANTHER" id="PTHR10256">
    <property type="entry name" value="SELENIDE, WATER DIKINASE"/>
    <property type="match status" value="1"/>
</dbReference>
<dbReference type="Pfam" id="PF00586">
    <property type="entry name" value="AIRS"/>
    <property type="match status" value="1"/>
</dbReference>
<dbReference type="Pfam" id="PF02769">
    <property type="entry name" value="AIRS_C"/>
    <property type="match status" value="1"/>
</dbReference>
<dbReference type="PIRSF" id="PIRSF036407">
    <property type="entry name" value="Selenphspht_syn"/>
    <property type="match status" value="1"/>
</dbReference>
<dbReference type="SUPFAM" id="SSF56042">
    <property type="entry name" value="PurM C-terminal domain-like"/>
    <property type="match status" value="1"/>
</dbReference>
<dbReference type="SUPFAM" id="SSF55326">
    <property type="entry name" value="PurM N-terminal domain-like"/>
    <property type="match status" value="1"/>
</dbReference>
<gene>
    <name evidence="1" type="primary">selD</name>
    <name type="ordered locus">YPO2164</name>
    <name type="ordered locus">y2157</name>
    <name type="ordered locus">YP_1964</name>
</gene>
<evidence type="ECO:0000255" key="1">
    <source>
        <dbReference type="HAMAP-Rule" id="MF_00625"/>
    </source>
</evidence>
<sequence>MASPAIRLTQYSHGAGCGCKISPKVLDKILHTEQQKFFDPRLLVGNETRDDAAVYDIGNGVGIISTTDFFMPIVDDPFDFGRIAATNAISDVYAMGGKPIMAIAILGWPIDKLAPEIAQQVIEGGRYVCQQAGISLAGGHSIDAPEPILGLAVTGIVSTEQVKKNSAAKPGCKLFLTKPLGIGILTTAEKKSKLRPEHRGLATETMCQLNKPGADFAHIPGVTAMTDVTGFGLLGHLSEICQGSGVQAILHYSAIPRLPAVEDYIAEGCVPGGTGRNFDSYGHLIGNMSDLQKQLLCDPQTSGGLLLAVLPDAEADVQAIAAQHGMTLSPIGELTSADSRRALIEIVV</sequence>
<keyword id="KW-0067">ATP-binding</keyword>
<keyword id="KW-0418">Kinase</keyword>
<keyword id="KW-0460">Magnesium</keyword>
<keyword id="KW-0479">Metal-binding</keyword>
<keyword id="KW-0547">Nucleotide-binding</keyword>
<keyword id="KW-1185">Reference proteome</keyword>
<keyword id="KW-0711">Selenium</keyword>
<keyword id="KW-0808">Transferase</keyword>
<comment type="function">
    <text evidence="1">Synthesizes selenophosphate from selenide and ATP.</text>
</comment>
<comment type="catalytic activity">
    <reaction evidence="1">
        <text>hydrogenselenide + ATP + H2O = selenophosphate + AMP + phosphate + 2 H(+)</text>
        <dbReference type="Rhea" id="RHEA:18737"/>
        <dbReference type="ChEBI" id="CHEBI:15377"/>
        <dbReference type="ChEBI" id="CHEBI:15378"/>
        <dbReference type="ChEBI" id="CHEBI:16144"/>
        <dbReference type="ChEBI" id="CHEBI:29317"/>
        <dbReference type="ChEBI" id="CHEBI:30616"/>
        <dbReference type="ChEBI" id="CHEBI:43474"/>
        <dbReference type="ChEBI" id="CHEBI:456215"/>
        <dbReference type="EC" id="2.7.9.3"/>
    </reaction>
</comment>
<comment type="cofactor">
    <cofactor evidence="1">
        <name>Mg(2+)</name>
        <dbReference type="ChEBI" id="CHEBI:18420"/>
    </cofactor>
    <text evidence="1">Binds 1 Mg(2+) ion per monomer.</text>
</comment>
<comment type="subunit">
    <text evidence="1">Homodimer.</text>
</comment>
<comment type="similarity">
    <text evidence="1">Belongs to the selenophosphate synthase 1 family. Class I subfamily.</text>
</comment>
<reference key="1">
    <citation type="journal article" date="2001" name="Nature">
        <title>Genome sequence of Yersinia pestis, the causative agent of plague.</title>
        <authorList>
            <person name="Parkhill J."/>
            <person name="Wren B.W."/>
            <person name="Thomson N.R."/>
            <person name="Titball R.W."/>
            <person name="Holden M.T.G."/>
            <person name="Prentice M.B."/>
            <person name="Sebaihia M."/>
            <person name="James K.D."/>
            <person name="Churcher C.M."/>
            <person name="Mungall K.L."/>
            <person name="Baker S."/>
            <person name="Basham D."/>
            <person name="Bentley S.D."/>
            <person name="Brooks K."/>
            <person name="Cerdeno-Tarraga A.-M."/>
            <person name="Chillingworth T."/>
            <person name="Cronin A."/>
            <person name="Davies R.M."/>
            <person name="Davis P."/>
            <person name="Dougan G."/>
            <person name="Feltwell T."/>
            <person name="Hamlin N."/>
            <person name="Holroyd S."/>
            <person name="Jagels K."/>
            <person name="Karlyshev A.V."/>
            <person name="Leather S."/>
            <person name="Moule S."/>
            <person name="Oyston P.C.F."/>
            <person name="Quail M.A."/>
            <person name="Rutherford K.M."/>
            <person name="Simmonds M."/>
            <person name="Skelton J."/>
            <person name="Stevens K."/>
            <person name="Whitehead S."/>
            <person name="Barrell B.G."/>
        </authorList>
    </citation>
    <scope>NUCLEOTIDE SEQUENCE [LARGE SCALE GENOMIC DNA]</scope>
    <source>
        <strain>CO-92 / Biovar Orientalis</strain>
    </source>
</reference>
<reference key="2">
    <citation type="journal article" date="2002" name="J. Bacteriol.">
        <title>Genome sequence of Yersinia pestis KIM.</title>
        <authorList>
            <person name="Deng W."/>
            <person name="Burland V."/>
            <person name="Plunkett G. III"/>
            <person name="Boutin A."/>
            <person name="Mayhew G.F."/>
            <person name="Liss P."/>
            <person name="Perna N.T."/>
            <person name="Rose D.J."/>
            <person name="Mau B."/>
            <person name="Zhou S."/>
            <person name="Schwartz D.C."/>
            <person name="Fetherston J.D."/>
            <person name="Lindler L.E."/>
            <person name="Brubaker R.R."/>
            <person name="Plano G.V."/>
            <person name="Straley S.C."/>
            <person name="McDonough K.A."/>
            <person name="Nilles M.L."/>
            <person name="Matson J.S."/>
            <person name="Blattner F.R."/>
            <person name="Perry R.D."/>
        </authorList>
    </citation>
    <scope>NUCLEOTIDE SEQUENCE [LARGE SCALE GENOMIC DNA]</scope>
    <source>
        <strain>KIM10+ / Biovar Mediaevalis</strain>
    </source>
</reference>
<reference key="3">
    <citation type="journal article" date="2004" name="DNA Res.">
        <title>Complete genome sequence of Yersinia pestis strain 91001, an isolate avirulent to humans.</title>
        <authorList>
            <person name="Song Y."/>
            <person name="Tong Z."/>
            <person name="Wang J."/>
            <person name="Wang L."/>
            <person name="Guo Z."/>
            <person name="Han Y."/>
            <person name="Zhang J."/>
            <person name="Pei D."/>
            <person name="Zhou D."/>
            <person name="Qin H."/>
            <person name="Pang X."/>
            <person name="Han Y."/>
            <person name="Zhai J."/>
            <person name="Li M."/>
            <person name="Cui B."/>
            <person name="Qi Z."/>
            <person name="Jin L."/>
            <person name="Dai R."/>
            <person name="Chen F."/>
            <person name="Li S."/>
            <person name="Ye C."/>
            <person name="Du Z."/>
            <person name="Lin W."/>
            <person name="Wang J."/>
            <person name="Yu J."/>
            <person name="Yang H."/>
            <person name="Wang J."/>
            <person name="Huang P."/>
            <person name="Yang R."/>
        </authorList>
    </citation>
    <scope>NUCLEOTIDE SEQUENCE [LARGE SCALE GENOMIC DNA]</scope>
    <source>
        <strain>91001 / Biovar Mediaevalis</strain>
    </source>
</reference>
<feature type="chain" id="PRO_0000127643" description="Selenide, water dikinase">
    <location>
        <begin position="1"/>
        <end position="348"/>
    </location>
</feature>
<feature type="active site" evidence="1">
    <location>
        <position position="17"/>
    </location>
</feature>
<feature type="binding site" description="in other chain" evidence="1">
    <location>
        <position position="20"/>
    </location>
    <ligand>
        <name>ATP</name>
        <dbReference type="ChEBI" id="CHEBI:30616"/>
        <note>ligand shared between dimeric partners</note>
    </ligand>
</feature>
<feature type="binding site" description="in other chain" evidence="1">
    <location>
        <begin position="48"/>
        <end position="50"/>
    </location>
    <ligand>
        <name>ATP</name>
        <dbReference type="ChEBI" id="CHEBI:30616"/>
        <note>ligand shared between dimeric partners</note>
    </ligand>
</feature>
<feature type="binding site" evidence="1">
    <location>
        <position position="51"/>
    </location>
    <ligand>
        <name>Mg(2+)</name>
        <dbReference type="ChEBI" id="CHEBI:18420"/>
    </ligand>
</feature>
<feature type="binding site" description="in other chain" evidence="1">
    <location>
        <position position="68"/>
    </location>
    <ligand>
        <name>ATP</name>
        <dbReference type="ChEBI" id="CHEBI:30616"/>
        <note>ligand shared between dimeric partners</note>
    </ligand>
</feature>
<feature type="binding site" description="in other chain" evidence="1">
    <location>
        <position position="91"/>
    </location>
    <ligand>
        <name>ATP</name>
        <dbReference type="ChEBI" id="CHEBI:30616"/>
        <note>ligand shared between dimeric partners</note>
    </ligand>
</feature>
<feature type="binding site" evidence="1">
    <location>
        <position position="91"/>
    </location>
    <ligand>
        <name>Mg(2+)</name>
        <dbReference type="ChEBI" id="CHEBI:18420"/>
    </ligand>
</feature>
<feature type="binding site" evidence="1">
    <location>
        <begin position="139"/>
        <end position="141"/>
    </location>
    <ligand>
        <name>ATP</name>
        <dbReference type="ChEBI" id="CHEBI:30616"/>
        <note>ligand shared between dimeric partners</note>
    </ligand>
</feature>
<feature type="binding site" evidence="1">
    <location>
        <position position="227"/>
    </location>
    <ligand>
        <name>Mg(2+)</name>
        <dbReference type="ChEBI" id="CHEBI:18420"/>
    </ligand>
</feature>
<feature type="site" description="Important for catalytic activity" evidence="1">
    <location>
        <position position="20"/>
    </location>
</feature>
<proteinExistence type="inferred from homology"/>
<protein>
    <recommendedName>
        <fullName evidence="1">Selenide, water dikinase</fullName>
        <ecNumber evidence="1">2.7.9.3</ecNumber>
    </recommendedName>
    <alternativeName>
        <fullName evidence="1">Selenium donor protein</fullName>
    </alternativeName>
    <alternativeName>
        <fullName evidence="1">Selenophosphate synthase</fullName>
    </alternativeName>
</protein>
<organism>
    <name type="scientific">Yersinia pestis</name>
    <dbReference type="NCBI Taxonomy" id="632"/>
    <lineage>
        <taxon>Bacteria</taxon>
        <taxon>Pseudomonadati</taxon>
        <taxon>Pseudomonadota</taxon>
        <taxon>Gammaproteobacteria</taxon>
        <taxon>Enterobacterales</taxon>
        <taxon>Yersiniaceae</taxon>
        <taxon>Yersinia</taxon>
    </lineage>
</organism>
<name>SELD_YERPE</name>
<accession>Q8ZEK1</accession>
<accession>Q0WEZ9</accession>